<accession>B3CRE6</accession>
<organism>
    <name type="scientific">Orientia tsutsugamushi (strain Ikeda)</name>
    <name type="common">Rickettsia tsutsugamushi</name>
    <dbReference type="NCBI Taxonomy" id="334380"/>
    <lineage>
        <taxon>Bacteria</taxon>
        <taxon>Pseudomonadati</taxon>
        <taxon>Pseudomonadota</taxon>
        <taxon>Alphaproteobacteria</taxon>
        <taxon>Rickettsiales</taxon>
        <taxon>Rickettsiaceae</taxon>
        <taxon>Rickettsieae</taxon>
        <taxon>Orientia</taxon>
    </lineage>
</organism>
<feature type="chain" id="PRO_1000089468" description="Octanoyltransferase">
    <location>
        <begin position="1"/>
        <end position="208"/>
    </location>
</feature>
<feature type="domain" description="BPL/LPL catalytic" evidence="2">
    <location>
        <begin position="30"/>
        <end position="208"/>
    </location>
</feature>
<feature type="active site" description="Acyl-thioester intermediate" evidence="1">
    <location>
        <position position="173"/>
    </location>
</feature>
<feature type="binding site" evidence="1">
    <location>
        <begin position="69"/>
        <end position="76"/>
    </location>
    <ligand>
        <name>substrate</name>
    </ligand>
</feature>
<feature type="binding site" evidence="1">
    <location>
        <begin position="142"/>
        <end position="144"/>
    </location>
    <ligand>
        <name>substrate</name>
    </ligand>
</feature>
<feature type="binding site" evidence="1">
    <location>
        <begin position="155"/>
        <end position="157"/>
    </location>
    <ligand>
        <name>substrate</name>
    </ligand>
</feature>
<feature type="site" description="Lowers pKa of active site Cys" evidence="1">
    <location>
        <position position="139"/>
    </location>
</feature>
<comment type="function">
    <text evidence="1">Catalyzes the transfer of endogenously produced octanoic acid from octanoyl-acyl-carrier-protein onto the lipoyl domains of lipoate-dependent enzymes. Lipoyl-ACP can also act as a substrate although octanoyl-ACP is likely to be the physiological substrate.</text>
</comment>
<comment type="catalytic activity">
    <reaction evidence="1">
        <text>octanoyl-[ACP] + L-lysyl-[protein] = N(6)-octanoyl-L-lysyl-[protein] + holo-[ACP] + H(+)</text>
        <dbReference type="Rhea" id="RHEA:17665"/>
        <dbReference type="Rhea" id="RHEA-COMP:9636"/>
        <dbReference type="Rhea" id="RHEA-COMP:9685"/>
        <dbReference type="Rhea" id="RHEA-COMP:9752"/>
        <dbReference type="Rhea" id="RHEA-COMP:9928"/>
        <dbReference type="ChEBI" id="CHEBI:15378"/>
        <dbReference type="ChEBI" id="CHEBI:29969"/>
        <dbReference type="ChEBI" id="CHEBI:64479"/>
        <dbReference type="ChEBI" id="CHEBI:78463"/>
        <dbReference type="ChEBI" id="CHEBI:78809"/>
        <dbReference type="EC" id="2.3.1.181"/>
    </reaction>
</comment>
<comment type="pathway">
    <text evidence="1">Protein modification; protein lipoylation via endogenous pathway; protein N(6)-(lipoyl)lysine from octanoyl-[acyl-carrier-protein]: step 1/2.</text>
</comment>
<comment type="subcellular location">
    <subcellularLocation>
        <location evidence="1">Cytoplasm</location>
    </subcellularLocation>
</comment>
<comment type="miscellaneous">
    <text evidence="1">In the reaction, the free carboxyl group of octanoic acid is attached via an amide linkage to the epsilon-amino group of a specific lysine residue of lipoyl domains of lipoate-dependent enzymes.</text>
</comment>
<comment type="similarity">
    <text evidence="1">Belongs to the LipB family.</text>
</comment>
<reference key="1">
    <citation type="journal article" date="2008" name="DNA Res.">
        <title>The whole-genome sequencing of the obligate intracellular bacterium Orientia tsutsugamushi revealed massive gene amplification during reductive genome evolution.</title>
        <authorList>
            <person name="Nakayama K."/>
            <person name="Yamashita A."/>
            <person name="Kurokawa K."/>
            <person name="Morimoto T."/>
            <person name="Ogawa M."/>
            <person name="Fukuhara M."/>
            <person name="Urakami H."/>
            <person name="Ohnishi M."/>
            <person name="Uchiyama I."/>
            <person name="Ogura Y."/>
            <person name="Ooka T."/>
            <person name="Oshima K."/>
            <person name="Tamura A."/>
            <person name="Hattori M."/>
            <person name="Hayashi T."/>
        </authorList>
    </citation>
    <scope>NUCLEOTIDE SEQUENCE [LARGE SCALE GENOMIC DNA]</scope>
    <source>
        <strain>Ikeda</strain>
    </source>
</reference>
<proteinExistence type="inferred from homology"/>
<keyword id="KW-0012">Acyltransferase</keyword>
<keyword id="KW-0963">Cytoplasm</keyword>
<keyword id="KW-0808">Transferase</keyword>
<sequence>MVEWIEIQYPIEYGEAYKMMKSRLTGILNGTASEAVFILEHQDVYTAGISAKNDELLNCYDIPVHHTDRGGKFTYHGPGQIIIYPVINLAVNGRVKDIRNYVNNLASLVINSLKFFNITGITVQDTIGVWIDSEFGRKKIASIGVRIHKWITYHGVAINVCPDLKKFKGIIPCGDRDTIVTSISELLDQKIDLDYYKAILKQEFYKIF</sequence>
<evidence type="ECO:0000255" key="1">
    <source>
        <dbReference type="HAMAP-Rule" id="MF_00013"/>
    </source>
</evidence>
<evidence type="ECO:0000255" key="2">
    <source>
        <dbReference type="PROSITE-ProRule" id="PRU01067"/>
    </source>
</evidence>
<name>LIPB_ORITI</name>
<protein>
    <recommendedName>
        <fullName evidence="1">Octanoyltransferase</fullName>
        <ecNumber evidence="1">2.3.1.181</ecNumber>
    </recommendedName>
    <alternativeName>
        <fullName evidence="1">Lipoate-protein ligase B</fullName>
    </alternativeName>
    <alternativeName>
        <fullName evidence="1">Lipoyl/octanoyl transferase</fullName>
    </alternativeName>
    <alternativeName>
        <fullName evidence="1">Octanoyl-[acyl-carrier-protein]-protein N-octanoyltransferase</fullName>
    </alternativeName>
</protein>
<gene>
    <name evidence="1" type="primary">lipB</name>
    <name type="ordered locus">OTT_0672</name>
</gene>
<dbReference type="EC" id="2.3.1.181" evidence="1"/>
<dbReference type="EMBL" id="AP008981">
    <property type="protein sequence ID" value="BAG40130.1"/>
    <property type="molecule type" value="Genomic_DNA"/>
</dbReference>
<dbReference type="RefSeq" id="WP_012461303.1">
    <property type="nucleotide sequence ID" value="NC_010793.1"/>
</dbReference>
<dbReference type="SMR" id="B3CRE6"/>
<dbReference type="KEGG" id="ott:OTT_0672"/>
<dbReference type="HOGENOM" id="CLU_035168_3_0_5"/>
<dbReference type="OrthoDB" id="9787061at2"/>
<dbReference type="UniPathway" id="UPA00538">
    <property type="reaction ID" value="UER00592"/>
</dbReference>
<dbReference type="Proteomes" id="UP000001033">
    <property type="component" value="Chromosome"/>
</dbReference>
<dbReference type="GO" id="GO:0005737">
    <property type="term" value="C:cytoplasm"/>
    <property type="evidence" value="ECO:0007669"/>
    <property type="project" value="UniProtKB-SubCell"/>
</dbReference>
<dbReference type="GO" id="GO:0033819">
    <property type="term" value="F:lipoyl(octanoyl) transferase activity"/>
    <property type="evidence" value="ECO:0007669"/>
    <property type="project" value="UniProtKB-EC"/>
</dbReference>
<dbReference type="GO" id="GO:0036211">
    <property type="term" value="P:protein modification process"/>
    <property type="evidence" value="ECO:0007669"/>
    <property type="project" value="InterPro"/>
</dbReference>
<dbReference type="CDD" id="cd16444">
    <property type="entry name" value="LipB"/>
    <property type="match status" value="1"/>
</dbReference>
<dbReference type="Gene3D" id="3.30.930.10">
    <property type="entry name" value="Bira Bifunctional Protein, Domain 2"/>
    <property type="match status" value="1"/>
</dbReference>
<dbReference type="HAMAP" id="MF_00013">
    <property type="entry name" value="LipB"/>
    <property type="match status" value="1"/>
</dbReference>
<dbReference type="InterPro" id="IPR045864">
    <property type="entry name" value="aa-tRNA-synth_II/BPL/LPL"/>
</dbReference>
<dbReference type="InterPro" id="IPR004143">
    <property type="entry name" value="BPL_LPL_catalytic"/>
</dbReference>
<dbReference type="InterPro" id="IPR000544">
    <property type="entry name" value="Octanoyltransferase"/>
</dbReference>
<dbReference type="InterPro" id="IPR020605">
    <property type="entry name" value="Octanoyltransferase_CS"/>
</dbReference>
<dbReference type="NCBIfam" id="TIGR00214">
    <property type="entry name" value="lipB"/>
    <property type="match status" value="1"/>
</dbReference>
<dbReference type="NCBIfam" id="NF010921">
    <property type="entry name" value="PRK14341.1"/>
    <property type="match status" value="1"/>
</dbReference>
<dbReference type="NCBIfam" id="NF010925">
    <property type="entry name" value="PRK14345.1"/>
    <property type="match status" value="1"/>
</dbReference>
<dbReference type="PANTHER" id="PTHR10993:SF7">
    <property type="entry name" value="LIPOYLTRANSFERASE 2, MITOCHONDRIAL-RELATED"/>
    <property type="match status" value="1"/>
</dbReference>
<dbReference type="PANTHER" id="PTHR10993">
    <property type="entry name" value="OCTANOYLTRANSFERASE"/>
    <property type="match status" value="1"/>
</dbReference>
<dbReference type="Pfam" id="PF21948">
    <property type="entry name" value="LplA-B_cat"/>
    <property type="match status" value="1"/>
</dbReference>
<dbReference type="PIRSF" id="PIRSF016262">
    <property type="entry name" value="LPLase"/>
    <property type="match status" value="1"/>
</dbReference>
<dbReference type="SUPFAM" id="SSF55681">
    <property type="entry name" value="Class II aaRS and biotin synthetases"/>
    <property type="match status" value="1"/>
</dbReference>
<dbReference type="PROSITE" id="PS51733">
    <property type="entry name" value="BPL_LPL_CATALYTIC"/>
    <property type="match status" value="1"/>
</dbReference>
<dbReference type="PROSITE" id="PS01313">
    <property type="entry name" value="LIPB"/>
    <property type="match status" value="1"/>
</dbReference>